<sequence length="33" mass="3203">AVPCGQVSSALSPCMSYLTGGGDDPEARCCAGV</sequence>
<comment type="function">
    <text evidence="2 3 4 5">Plant non-specific lipid-transfer proteins transfer phospholipids as well as galactolipids across membranes (By similarity). May play a role in wax or cutin deposition in the cell walls of expanding epidermal cells and certain secretory tissues (By similarity). Has antibacterial activity against Gram-positive bacteria S.aureus and S.epidermidis and blocks biofilm formation (PubMed:29577952). In a mouse model, also protects against bacterial sepsis and has an anti-inflammatory effect (PubMed:28559184, PubMed:29577952). Exhibits antinociceptive activity upon oral or intraperitoneal application in mice (PubMed:26783638).</text>
</comment>
<comment type="subunit">
    <text evidence="3">Dimer.</text>
</comment>
<comment type="mass spectrometry" mass="9450.0" method="Electrospray" evidence="3">
    <text>Two determined masses suggest presence of different isoforms.</text>
</comment>
<comment type="mass spectrometry" mass="9466.0" method="Electrospray" evidence="3">
    <text>Two determined masses suggest presence of different isoforms.</text>
</comment>
<comment type="similarity">
    <text evidence="8">Belongs to the plant LTP family.</text>
</comment>
<proteinExistence type="evidence at protein level"/>
<keyword id="KW-0044">Antibiotic</keyword>
<keyword id="KW-0929">Antimicrobial</keyword>
<keyword id="KW-0903">Direct protein sequencing</keyword>
<keyword id="KW-1015">Disulfide bond</keyword>
<keyword id="KW-0446">Lipid-binding</keyword>
<keyword id="KW-0813">Transport</keyword>
<name>NLTP_MORCI</name>
<accession>C0HJH5</accession>
<feature type="chain" id="PRO_0000432829" description="Non-specific lipid-transfer protein">
    <location>
        <begin position="1"/>
        <end position="33" status="greater than"/>
    </location>
</feature>
<feature type="disulfide bond" evidence="1">
    <location>
        <begin position="4"/>
        <end status="unknown"/>
    </location>
</feature>
<feature type="disulfide bond" evidence="1">
    <location>
        <begin position="14"/>
        <end position="29"/>
    </location>
</feature>
<feature type="disulfide bond" evidence="1">
    <location>
        <begin position="30"/>
        <end status="unknown"/>
    </location>
</feature>
<feature type="non-terminal residue" evidence="6">
    <location>
        <position position="33"/>
    </location>
</feature>
<dbReference type="SMR" id="C0HJH5"/>
<dbReference type="GO" id="GO:0008289">
    <property type="term" value="F:lipid binding"/>
    <property type="evidence" value="ECO:0007669"/>
    <property type="project" value="UniProtKB-KW"/>
</dbReference>
<dbReference type="GO" id="GO:0042742">
    <property type="term" value="P:defense response to bacterium"/>
    <property type="evidence" value="ECO:0007669"/>
    <property type="project" value="UniProtKB-KW"/>
</dbReference>
<dbReference type="GO" id="GO:0006869">
    <property type="term" value="P:lipid transport"/>
    <property type="evidence" value="ECO:0007669"/>
    <property type="project" value="InterPro"/>
</dbReference>
<dbReference type="Gene3D" id="1.10.110.10">
    <property type="entry name" value="Plant lipid-transfer and hydrophobic proteins"/>
    <property type="match status" value="1"/>
</dbReference>
<dbReference type="InterPro" id="IPR036312">
    <property type="entry name" value="Bifun_inhib/LTP/seed_sf"/>
</dbReference>
<dbReference type="InterPro" id="IPR016140">
    <property type="entry name" value="Bifunc_inhib/LTP/seed_store"/>
</dbReference>
<dbReference type="InterPro" id="IPR000528">
    <property type="entry name" value="Plant_nsLTP"/>
</dbReference>
<dbReference type="Pfam" id="PF00234">
    <property type="entry name" value="Tryp_alpha_amyl"/>
    <property type="match status" value="1"/>
</dbReference>
<dbReference type="PRINTS" id="PR00382">
    <property type="entry name" value="LIPIDTRNSFER"/>
</dbReference>
<dbReference type="SUPFAM" id="SSF47699">
    <property type="entry name" value="Bifunctional inhibitor/lipid-transfer protein/seed storage 2S albumin"/>
    <property type="match status" value="1"/>
</dbReference>
<protein>
    <recommendedName>
        <fullName evidence="6">Non-specific lipid-transfer protein</fullName>
    </recommendedName>
    <alternativeName>
        <fullName evidence="6">McLTP1</fullName>
    </alternativeName>
</protein>
<evidence type="ECO:0000250" key="1">
    <source>
        <dbReference type="UniProtKB" id="P81402"/>
    </source>
</evidence>
<evidence type="ECO:0000250" key="2">
    <source>
        <dbReference type="UniProtKB" id="Q42952"/>
    </source>
</evidence>
<evidence type="ECO:0000269" key="3">
    <source>
    </source>
</evidence>
<evidence type="ECO:0000269" key="4">
    <source>
    </source>
</evidence>
<evidence type="ECO:0000269" key="5">
    <source>
    </source>
</evidence>
<evidence type="ECO:0000303" key="6">
    <source>
    </source>
</evidence>
<evidence type="ECO:0000303" key="7">
    <source>
    </source>
</evidence>
<evidence type="ECO:0000305" key="8"/>
<organism evidence="6">
    <name type="scientific">Morinda citrifolia</name>
    <name type="common">Indian mulberry</name>
    <dbReference type="NCBI Taxonomy" id="43522"/>
    <lineage>
        <taxon>Eukaryota</taxon>
        <taxon>Viridiplantae</taxon>
        <taxon>Streptophyta</taxon>
        <taxon>Embryophyta</taxon>
        <taxon>Tracheophyta</taxon>
        <taxon>Spermatophyta</taxon>
        <taxon>Magnoliopsida</taxon>
        <taxon>eudicotyledons</taxon>
        <taxon>Gunneridae</taxon>
        <taxon>Pentapetalae</taxon>
        <taxon>asterids</taxon>
        <taxon>lamiids</taxon>
        <taxon>Gentianales</taxon>
        <taxon>Rubiaceae</taxon>
        <taxon>Rubioideae</taxon>
        <taxon>Morindeae</taxon>
        <taxon>Morinda</taxon>
    </lineage>
</organism>
<reference evidence="8" key="1">
    <citation type="journal article" date="2016" name="Int. J. Biol. Macromol.">
        <title>First isolation and antinociceptive activity of a lipid transfer protein from noni (Morinda citrifolia) seeds.</title>
        <authorList>
            <person name="Campos D.C."/>
            <person name="Costa A.S."/>
            <person name="Lima A.D."/>
            <person name="Silva F.D."/>
            <person name="Lobo M.D."/>
            <person name="Monteiro-Moreira A.C."/>
            <person name="Moreira R.A."/>
            <person name="Leal L.K."/>
            <person name="Miron D."/>
            <person name="Vasconcelos I.M."/>
            <person name="Oliveira H.D."/>
        </authorList>
    </citation>
    <scope>PROTEIN SEQUENCE</scope>
    <scope>FUNCTION</scope>
    <scope>SUBUNIT</scope>
    <scope>MASS SPECTROMETRY</scope>
    <source>
        <tissue evidence="6">Seed</tissue>
    </source>
</reference>
<reference key="2">
    <citation type="journal article" date="2017" name="Int. J. Biol. Macromol.">
        <title>Morinda citrifolia lipid transfer protein 1 exhibits anti-inflammatory activity by modulation of pro- and anti-inflammatory cytokines.</title>
        <authorList>
            <person name="Campos D.C.O."/>
            <person name="Costa A.S."/>
            <person name="Luz P.B."/>
            <person name="Soares P.M.G."/>
            <person name="Alencar N.M.N."/>
            <person name="Oliveira H.D."/>
        </authorList>
    </citation>
    <scope>FUNCTION</scope>
    <source>
        <tissue evidence="7">Seed</tissue>
    </source>
</reference>
<reference key="3">
    <citation type="journal article" date="2018" name="Biochimie">
        <title>Lipid transfer protein isolated from noni seeds displays antibacterial activity in vitro and improves survival in lethal sepsis induced by CLP in mice.</title>
        <authorList>
            <person name="Souza A.A."/>
            <person name="Costa A.S."/>
            <person name="Campos D.C.O."/>
            <person name="Batista A.H.M."/>
            <person name="Sales G.W.P."/>
            <person name="Nogueira N.A.P."/>
            <person name="Alves K.M.M."/>
            <person name="Coelho-de-Souza A.N."/>
            <person name="Oliveira H.D."/>
        </authorList>
    </citation>
    <scope>FUNCTION</scope>
    <source>
        <tissue evidence="7">Seed</tissue>
    </source>
</reference>